<protein>
    <recommendedName>
        <fullName evidence="9">Antiholin</fullName>
    </recommendedName>
</protein>
<feature type="chain" id="PRO_0000077654" description="Antiholin">
    <location>
        <begin position="1"/>
        <end position="71"/>
    </location>
</feature>
<feature type="topological domain" description="Cytoplasmic" evidence="12">
    <location>
        <begin position="1"/>
        <end position="6"/>
    </location>
</feature>
<feature type="transmembrane region" description="Helical" evidence="2">
    <location>
        <begin position="7"/>
        <end position="27"/>
    </location>
</feature>
<feature type="topological domain" description="Periplasmic" evidence="12">
    <location>
        <begin position="28"/>
        <end position="37"/>
    </location>
</feature>
<feature type="transmembrane region" description="Helical" evidence="2">
    <location>
        <begin position="38"/>
        <end position="58"/>
    </location>
</feature>
<feature type="topological domain" description="Cytoplasmic" evidence="12">
    <location>
        <begin position="59"/>
        <end position="71"/>
    </location>
</feature>
<feature type="splice variant" id="VSP_058889" description="In isoform Holin." evidence="6">
    <location>
        <begin position="1"/>
        <end position="3"/>
    </location>
</feature>
<feature type="mutagenesis site" description="No effect on lysis activity." evidence="6">
    <original>M</original>
    <variation>L</variation>
    <location>
        <position position="1"/>
    </location>
</feature>
<feature type="mutagenesis site" description="Decrease in lysis inhibition by isoform Antiholin." evidence="3">
    <original>K</original>
    <variation>R</variation>
    <variation>S</variation>
    <variation>T</variation>
    <location>
        <position position="2"/>
    </location>
</feature>
<feature type="mutagenesis site" description="Complete loss of lysis activity." evidence="6">
    <original>M</original>
    <variation>L</variation>
    <location>
        <position position="4"/>
    </location>
</feature>
<reference key="1">
    <citation type="journal article" date="1991" name="J. Bacteriol.">
        <title>Dual start motif in two lambdoid S genes unrelated to lambda S.</title>
        <authorList>
            <person name="Bonovich M.T."/>
            <person name="Young R."/>
        </authorList>
    </citation>
    <scope>NUCLEOTIDE SEQUENCE [GENOMIC DNA]</scope>
    <scope>MUTAGENESIS OF MET-1 AND MET-4</scope>
    <scope>SUBUNIT</scope>
    <scope>ALTERNATIVE INITIATION</scope>
</reference>
<reference key="2">
    <citation type="journal article" date="1999" name="Mol. Microbiol.">
        <title>Characterization of the dual start motif of a class II holin gene.</title>
        <authorList>
            <person name="Barenboim M."/>
            <person name="Chang C.Y."/>
            <person name="dib Hajj F."/>
            <person name="Young R."/>
        </authorList>
    </citation>
    <scope>CHARACTERIZATION</scope>
    <scope>ALTERNATIVE INITIATION</scope>
    <scope>FUNCTION (ISOFORM ANTIHOLIN)</scope>
    <scope>MUTAGENESIS OF LYS-2</scope>
</reference>
<reference key="3">
    <citation type="journal article" date="2007" name="J. Bacteriol.">
        <title>The pinholin of lambdoid phage 21: control of lysis by membrane depolarization.</title>
        <authorList>
            <person name="Park T."/>
            <person name="Struck D.K."/>
            <person name="Dankenbring C.A."/>
            <person name="Young R."/>
        </authorList>
    </citation>
    <scope>FUNCTION (ISOFORM HOLIN)</scope>
</reference>
<reference key="4">
    <citation type="journal article" date="2009" name="Proc. Natl. Acad. Sci. U.S.A.">
        <title>Structure of the lethal phage pinhole.</title>
        <authorList>
            <person name="Pang T."/>
            <person name="Savva C.G."/>
            <person name="Fleming K.G."/>
            <person name="Struck D.K."/>
            <person name="Young R."/>
        </authorList>
    </citation>
    <scope>FUNCTION (ISOFORM HOLIN)</scope>
    <scope>SUBUNIT</scope>
    <scope>TOPOLOGY</scope>
</reference>
<reference key="5">
    <citation type="journal article" date="2013" name="Proc. Natl. Acad. Sci. U.S.A.">
        <title>Visualization of pinholin lesions in vivo.</title>
        <authorList>
            <person name="Pang T."/>
            <person name="Fleming T.C."/>
            <person name="Pogliano K."/>
            <person name="Young R."/>
        </authorList>
    </citation>
    <scope>FUNCTION (ISOFORM HOLIN)</scope>
</reference>
<reference key="6">
    <citation type="journal article" date="2019" name="Anal. Biochem.">
        <title>Solid phase synthesis and spectroscopic characterization of the active and inactive forms of bacteriophage S21 pinholin protein.</title>
        <authorList>
            <person name="Drew D.L. Jr."/>
            <person name="Ahammad T."/>
            <person name="Serafin R.A."/>
            <person name="Butcher B.J."/>
            <person name="Clowes K.R."/>
            <person name="Drake Z."/>
            <person name="Sahu I.D."/>
            <person name="McCarrick R.M."/>
            <person name="Lorigan G.A."/>
        </authorList>
    </citation>
    <scope>DOMAIN</scope>
</reference>
<proteinExistence type="evidence at protein level"/>
<accession>P27360</accession>
<name>HOLIN_BPP21</name>
<organism>
    <name type="scientific">Enterobacteria phage P21</name>
    <name type="common">Bacteriophage 21</name>
    <name type="synonym">Bacteriophage P21</name>
    <dbReference type="NCBI Taxonomy" id="10711"/>
    <lineage>
        <taxon>Viruses</taxon>
        <taxon>Duplodnaviria</taxon>
        <taxon>Heunggongvirae</taxon>
        <taxon>Uroviricota</taxon>
        <taxon>Caudoviricetes</taxon>
        <taxon>Lambdavirus</taxon>
        <taxon>Lambdavirus lambda</taxon>
    </lineage>
</organism>
<dbReference type="EMBL" id="M65239">
    <property type="protein sequence ID" value="AAA32349.1"/>
    <property type="molecule type" value="Genomic_DNA"/>
</dbReference>
<dbReference type="SMR" id="P27360"/>
<dbReference type="DIP" id="DIP-49009N"/>
<dbReference type="TCDB" id="1.E.1.1.1">
    <property type="family name" value="the p21 holin s (p21 holin) family"/>
</dbReference>
<dbReference type="GO" id="GO:0020002">
    <property type="term" value="C:host cell plasma membrane"/>
    <property type="evidence" value="ECO:0007669"/>
    <property type="project" value="UniProtKB-SubCell"/>
</dbReference>
<dbReference type="GO" id="GO:0016020">
    <property type="term" value="C:membrane"/>
    <property type="evidence" value="ECO:0007669"/>
    <property type="project" value="UniProtKB-KW"/>
</dbReference>
<dbReference type="GO" id="GO:0042802">
    <property type="term" value="F:identical protein binding"/>
    <property type="evidence" value="ECO:0000353"/>
    <property type="project" value="IntAct"/>
</dbReference>
<dbReference type="GO" id="GO:0140911">
    <property type="term" value="F:pore-forming activity"/>
    <property type="evidence" value="ECO:0000314"/>
    <property type="project" value="UniProtKB"/>
</dbReference>
<dbReference type="GO" id="GO:0044659">
    <property type="term" value="P:viral release from host cell by cytolysis"/>
    <property type="evidence" value="ECO:0000314"/>
    <property type="project" value="UniProtKB"/>
</dbReference>
<dbReference type="InterPro" id="IPR007054">
    <property type="entry name" value="Lysis_S"/>
</dbReference>
<dbReference type="Pfam" id="PF04971">
    <property type="entry name" value="Phage_holin_2_1"/>
    <property type="match status" value="1"/>
</dbReference>
<dbReference type="PIRSF" id="PIRSF030786">
    <property type="entry name" value="Lysis_S"/>
    <property type="match status" value="1"/>
</dbReference>
<comment type="function">
    <molecule>Isoform Holin</molecule>
    <text evidence="4 5 7 11">Accumulates harmlessly in the cytoplasmic membrane until it reaches a critical concentration that triggers the formation of nanometer-scale pores (pinholes) causing host cell membrane depolarization and endolysin refolding and release into the periplasmic space (PubMed:17827300, PubMed:19861547, PubMed:23671069). Once the pinholin has permeabilized the host cell membrane, the SAR-endolysin is released into the periplasm and breaks down the peptidoglycan layer (PubMed:17827300, PubMed:19861547). Determines the precise timing of host cell lysis (PubMed:23671069). Participates with the SAR-endolysin and spanin proteins in the sequential events which lead to the programmed host cell lysis releasing the mature viral particles from the host cell (Probable) (PubMed:17827300).</text>
</comment>
<comment type="function">
    <molecule>Isoform Antiholin</molecule>
    <text evidence="11">Counteracts the aggregation of the holin molecules and thus of pore formation.</text>
</comment>
<comment type="subunit">
    <molecule>Isoform Holin</molecule>
    <text evidence="5 13">Homoheptamer; forms small heptameric channels of about 2 nm (pinholes) (PubMed:19861547). Interacts with isoform Antiholin; this interaction blocks the holin homomultimerization and delays host cell lysis (Probable).</text>
</comment>
<comment type="interaction">
    <interactant intactId="EBI-15616242">
        <id>P27360</id>
    </interactant>
    <interactant intactId="EBI-15616242">
        <id>P27360</id>
        <label>S</label>
    </interactant>
    <organismsDiffer>false</organismsDiffer>
    <experiments>4</experiments>
</comment>
<comment type="subcellular location">
    <subcellularLocation>
        <location evidence="1">Host cell inner membrane</location>
        <topology evidence="2">Multi-pass membrane protein</topology>
    </subcellularLocation>
    <text evidence="9 10">Classified as a class II holin.</text>
</comment>
<comment type="alternative products">
    <event type="alternative initiation"/>
    <isoform>
        <id>P27360-1</id>
        <name evidence="9 10">Antiholin</name>
        <name>S71</name>
        <sequence type="displayed"/>
    </isoform>
    <isoform>
        <id>P27360-2</id>
        <name evidence="9 10">Holin</name>
        <name>S68</name>
        <name>Pinholin</name>
        <sequence type="described" ref="VSP_058889"/>
    </isoform>
</comment>
<comment type="domain">
    <text evidence="8">The N-terminal transmembrane domain seems to be externalized during the pinhole formation.</text>
</comment>
<comment type="miscellaneous">
    <molecule>Isoform Holin</molecule>
    <text evidence="3">Antiholin and Holin ratio is about 1:2.</text>
</comment>
<organismHost>
    <name type="scientific">Escherichia coli</name>
    <dbReference type="NCBI Taxonomy" id="562"/>
</organismHost>
<gene>
    <name type="primary">S</name>
</gene>
<sequence>MKSMDKISTGIAYGTSAGSAGYWFLQWLDQVSPSQWAAIGVLGSLVLGFLTYLTNLYFKIREDRRKAARGE</sequence>
<evidence type="ECO:0000250" key="1">
    <source>
        <dbReference type="UniProtKB" id="P03705"/>
    </source>
</evidence>
<evidence type="ECO:0000255" key="2"/>
<evidence type="ECO:0000269" key="3">
    <source>
    </source>
</evidence>
<evidence type="ECO:0000269" key="4">
    <source>
    </source>
</evidence>
<evidence type="ECO:0000269" key="5">
    <source>
    </source>
</evidence>
<evidence type="ECO:0000269" key="6">
    <source>
    </source>
</evidence>
<evidence type="ECO:0000269" key="7">
    <source>
    </source>
</evidence>
<evidence type="ECO:0000269" key="8">
    <source>
    </source>
</evidence>
<evidence type="ECO:0000303" key="9">
    <source>
    </source>
</evidence>
<evidence type="ECO:0000303" key="10">
    <source>
    </source>
</evidence>
<evidence type="ECO:0000305" key="11">
    <source>
    </source>
</evidence>
<evidence type="ECO:0000305" key="12">
    <source>
    </source>
</evidence>
<evidence type="ECO:0000305" key="13">
    <source>
    </source>
</evidence>
<keyword id="KW-0024">Alternative initiation</keyword>
<keyword id="KW-0204">Cytolysis</keyword>
<keyword id="KW-1030">Host cell inner membrane</keyword>
<keyword id="KW-0578">Host cell lysis by virus</keyword>
<keyword id="KW-1032">Host cell membrane</keyword>
<keyword id="KW-1043">Host membrane</keyword>
<keyword id="KW-0472">Membrane</keyword>
<keyword id="KW-0812">Transmembrane</keyword>
<keyword id="KW-1133">Transmembrane helix</keyword>
<keyword id="KW-1188">Viral release from host cell</keyword>